<gene>
    <name evidence="1" type="primary">atpD</name>
    <name type="ordered locus">BceJ2315_00360</name>
    <name type="ORF">BCAL0036</name>
</gene>
<organism>
    <name type="scientific">Burkholderia cenocepacia (strain ATCC BAA-245 / DSM 16553 / LMG 16656 / NCTC 13227 / J2315 / CF5610)</name>
    <name type="common">Burkholderia cepacia (strain J2315)</name>
    <dbReference type="NCBI Taxonomy" id="216591"/>
    <lineage>
        <taxon>Bacteria</taxon>
        <taxon>Pseudomonadati</taxon>
        <taxon>Pseudomonadota</taxon>
        <taxon>Betaproteobacteria</taxon>
        <taxon>Burkholderiales</taxon>
        <taxon>Burkholderiaceae</taxon>
        <taxon>Burkholderia</taxon>
        <taxon>Burkholderia cepacia complex</taxon>
    </lineage>
</organism>
<evidence type="ECO:0000255" key="1">
    <source>
        <dbReference type="HAMAP-Rule" id="MF_01347"/>
    </source>
</evidence>
<name>ATPB_BURCJ</name>
<keyword id="KW-0066">ATP synthesis</keyword>
<keyword id="KW-0067">ATP-binding</keyword>
<keyword id="KW-0997">Cell inner membrane</keyword>
<keyword id="KW-1003">Cell membrane</keyword>
<keyword id="KW-0139">CF(1)</keyword>
<keyword id="KW-0375">Hydrogen ion transport</keyword>
<keyword id="KW-0406">Ion transport</keyword>
<keyword id="KW-0472">Membrane</keyword>
<keyword id="KW-0547">Nucleotide-binding</keyword>
<keyword id="KW-1278">Translocase</keyword>
<keyword id="KW-0813">Transport</keyword>
<protein>
    <recommendedName>
        <fullName evidence="1">ATP synthase subunit beta</fullName>
        <ecNumber evidence="1">7.1.2.2</ecNumber>
    </recommendedName>
    <alternativeName>
        <fullName evidence="1">ATP synthase F1 sector subunit beta</fullName>
    </alternativeName>
    <alternativeName>
        <fullName evidence="1">F-ATPase subunit beta</fullName>
    </alternativeName>
</protein>
<accession>B4EEY9</accession>
<sequence>MSTAALVEGKIVQCIGAVIDVEFPRDSMPKIYDALILDGSELTLEVQQQLGDGVVRTICLGASDGLRRGLTVKNTAKPISVPVGKPTLGRIMDVLGRPIDEAGPIDSDVTRSIHQKAPAFDELSPSTELLETGIKVIDLICPFAKGGKVGLFGGAGVGKTVNMMELINNIAKEHGGYSVFAGVGERTREGNDFYHEMKDSNVLDKVALVYGQMNEPPGNRLRVALTGLTMAEHFRDEGLDVLFFVDNIYRFTLAGTEVSALLGRMPSAVGYQPTLAEEMGKLQERITSTKKGSITSVQAVYVPADDLTDPSPATTFGHLDATVVLSRDIASLGIYPAVDPLDSTSRQIDPNVIGEEHYSITRRVQQTLQRYKELRDIIAILGMDELSPEDKLSVARARKIQRFLSQPFHVAEVFTGSPGKYVPLKETIRGFKMIVDGECDHLPEQAFYMVGTIDEAFEKAKKIQ</sequence>
<proteinExistence type="inferred from homology"/>
<dbReference type="EC" id="7.1.2.2" evidence="1"/>
<dbReference type="EMBL" id="AM747720">
    <property type="protein sequence ID" value="CAR50342.1"/>
    <property type="molecule type" value="Genomic_DNA"/>
</dbReference>
<dbReference type="RefSeq" id="WP_006482710.1">
    <property type="nucleotide sequence ID" value="NC_011000.1"/>
</dbReference>
<dbReference type="SMR" id="B4EEY9"/>
<dbReference type="GeneID" id="56556594"/>
<dbReference type="KEGG" id="bcj:BCAL0036"/>
<dbReference type="eggNOG" id="COG0055">
    <property type="taxonomic scope" value="Bacteria"/>
</dbReference>
<dbReference type="HOGENOM" id="CLU_022398_0_2_4"/>
<dbReference type="BioCyc" id="BCEN216591:G1G1V-39-MONOMER"/>
<dbReference type="Proteomes" id="UP000001035">
    <property type="component" value="Chromosome 1"/>
</dbReference>
<dbReference type="GO" id="GO:0005886">
    <property type="term" value="C:plasma membrane"/>
    <property type="evidence" value="ECO:0007669"/>
    <property type="project" value="UniProtKB-SubCell"/>
</dbReference>
<dbReference type="GO" id="GO:0045259">
    <property type="term" value="C:proton-transporting ATP synthase complex"/>
    <property type="evidence" value="ECO:0007669"/>
    <property type="project" value="UniProtKB-KW"/>
</dbReference>
<dbReference type="GO" id="GO:0005524">
    <property type="term" value="F:ATP binding"/>
    <property type="evidence" value="ECO:0007669"/>
    <property type="project" value="UniProtKB-UniRule"/>
</dbReference>
<dbReference type="GO" id="GO:0016887">
    <property type="term" value="F:ATP hydrolysis activity"/>
    <property type="evidence" value="ECO:0007669"/>
    <property type="project" value="InterPro"/>
</dbReference>
<dbReference type="GO" id="GO:0046933">
    <property type="term" value="F:proton-transporting ATP synthase activity, rotational mechanism"/>
    <property type="evidence" value="ECO:0007669"/>
    <property type="project" value="UniProtKB-UniRule"/>
</dbReference>
<dbReference type="CDD" id="cd18110">
    <property type="entry name" value="ATP-synt_F1_beta_C"/>
    <property type="match status" value="1"/>
</dbReference>
<dbReference type="CDD" id="cd18115">
    <property type="entry name" value="ATP-synt_F1_beta_N"/>
    <property type="match status" value="1"/>
</dbReference>
<dbReference type="CDD" id="cd01133">
    <property type="entry name" value="F1-ATPase_beta_CD"/>
    <property type="match status" value="1"/>
</dbReference>
<dbReference type="FunFam" id="1.10.1140.10:FF:000001">
    <property type="entry name" value="ATP synthase subunit beta"/>
    <property type="match status" value="1"/>
</dbReference>
<dbReference type="FunFam" id="3.40.50.300:FF:000004">
    <property type="entry name" value="ATP synthase subunit beta"/>
    <property type="match status" value="1"/>
</dbReference>
<dbReference type="Gene3D" id="2.40.10.170">
    <property type="match status" value="1"/>
</dbReference>
<dbReference type="Gene3D" id="1.10.1140.10">
    <property type="entry name" value="Bovine Mitochondrial F1-atpase, Atp Synthase Beta Chain, Chain D, domain 3"/>
    <property type="match status" value="1"/>
</dbReference>
<dbReference type="Gene3D" id="3.40.50.300">
    <property type="entry name" value="P-loop containing nucleotide triphosphate hydrolases"/>
    <property type="match status" value="1"/>
</dbReference>
<dbReference type="HAMAP" id="MF_01347">
    <property type="entry name" value="ATP_synth_beta_bact"/>
    <property type="match status" value="1"/>
</dbReference>
<dbReference type="InterPro" id="IPR003593">
    <property type="entry name" value="AAA+_ATPase"/>
</dbReference>
<dbReference type="InterPro" id="IPR055190">
    <property type="entry name" value="ATP-synt_VA_C"/>
</dbReference>
<dbReference type="InterPro" id="IPR005722">
    <property type="entry name" value="ATP_synth_F1_bsu"/>
</dbReference>
<dbReference type="InterPro" id="IPR020003">
    <property type="entry name" value="ATPase_a/bsu_AS"/>
</dbReference>
<dbReference type="InterPro" id="IPR050053">
    <property type="entry name" value="ATPase_alpha/beta_chains"/>
</dbReference>
<dbReference type="InterPro" id="IPR004100">
    <property type="entry name" value="ATPase_F1/V1/A1_a/bsu_N"/>
</dbReference>
<dbReference type="InterPro" id="IPR036121">
    <property type="entry name" value="ATPase_F1/V1/A1_a/bsu_N_sf"/>
</dbReference>
<dbReference type="InterPro" id="IPR000194">
    <property type="entry name" value="ATPase_F1/V1/A1_a/bsu_nucl-bd"/>
</dbReference>
<dbReference type="InterPro" id="IPR024034">
    <property type="entry name" value="ATPase_F1/V1_b/a_C"/>
</dbReference>
<dbReference type="InterPro" id="IPR027417">
    <property type="entry name" value="P-loop_NTPase"/>
</dbReference>
<dbReference type="NCBIfam" id="TIGR01039">
    <property type="entry name" value="atpD"/>
    <property type="match status" value="1"/>
</dbReference>
<dbReference type="PANTHER" id="PTHR15184">
    <property type="entry name" value="ATP SYNTHASE"/>
    <property type="match status" value="1"/>
</dbReference>
<dbReference type="PANTHER" id="PTHR15184:SF71">
    <property type="entry name" value="ATP SYNTHASE SUBUNIT BETA, MITOCHONDRIAL"/>
    <property type="match status" value="1"/>
</dbReference>
<dbReference type="Pfam" id="PF00006">
    <property type="entry name" value="ATP-synt_ab"/>
    <property type="match status" value="1"/>
</dbReference>
<dbReference type="Pfam" id="PF02874">
    <property type="entry name" value="ATP-synt_ab_N"/>
    <property type="match status" value="1"/>
</dbReference>
<dbReference type="Pfam" id="PF22919">
    <property type="entry name" value="ATP-synt_VA_C"/>
    <property type="match status" value="1"/>
</dbReference>
<dbReference type="SMART" id="SM00382">
    <property type="entry name" value="AAA"/>
    <property type="match status" value="1"/>
</dbReference>
<dbReference type="SUPFAM" id="SSF47917">
    <property type="entry name" value="C-terminal domain of alpha and beta subunits of F1 ATP synthase"/>
    <property type="match status" value="1"/>
</dbReference>
<dbReference type="SUPFAM" id="SSF50615">
    <property type="entry name" value="N-terminal domain of alpha and beta subunits of F1 ATP synthase"/>
    <property type="match status" value="1"/>
</dbReference>
<dbReference type="SUPFAM" id="SSF52540">
    <property type="entry name" value="P-loop containing nucleoside triphosphate hydrolases"/>
    <property type="match status" value="1"/>
</dbReference>
<dbReference type="PROSITE" id="PS00152">
    <property type="entry name" value="ATPASE_ALPHA_BETA"/>
    <property type="match status" value="1"/>
</dbReference>
<comment type="function">
    <text evidence="1">Produces ATP from ADP in the presence of a proton gradient across the membrane. The catalytic sites are hosted primarily by the beta subunits.</text>
</comment>
<comment type="catalytic activity">
    <reaction evidence="1">
        <text>ATP + H2O + 4 H(+)(in) = ADP + phosphate + 5 H(+)(out)</text>
        <dbReference type="Rhea" id="RHEA:57720"/>
        <dbReference type="ChEBI" id="CHEBI:15377"/>
        <dbReference type="ChEBI" id="CHEBI:15378"/>
        <dbReference type="ChEBI" id="CHEBI:30616"/>
        <dbReference type="ChEBI" id="CHEBI:43474"/>
        <dbReference type="ChEBI" id="CHEBI:456216"/>
        <dbReference type="EC" id="7.1.2.2"/>
    </reaction>
</comment>
<comment type="subunit">
    <text evidence="1">F-type ATPases have 2 components, CF(1) - the catalytic core - and CF(0) - the membrane proton channel. CF(1) has five subunits: alpha(3), beta(3), gamma(1), delta(1), epsilon(1). CF(0) has three main subunits: a(1), b(2) and c(9-12). The alpha and beta chains form an alternating ring which encloses part of the gamma chain. CF(1) is attached to CF(0) by a central stalk formed by the gamma and epsilon chains, while a peripheral stalk is formed by the delta and b chains.</text>
</comment>
<comment type="subcellular location">
    <subcellularLocation>
        <location evidence="1">Cell inner membrane</location>
        <topology evidence="1">Peripheral membrane protein</topology>
    </subcellularLocation>
</comment>
<comment type="similarity">
    <text evidence="1">Belongs to the ATPase alpha/beta chains family.</text>
</comment>
<reference key="1">
    <citation type="journal article" date="2009" name="J. Bacteriol.">
        <title>The genome of Burkholderia cenocepacia J2315, an epidemic pathogen of cystic fibrosis patients.</title>
        <authorList>
            <person name="Holden M.T."/>
            <person name="Seth-Smith H.M."/>
            <person name="Crossman L.C."/>
            <person name="Sebaihia M."/>
            <person name="Bentley S.D."/>
            <person name="Cerdeno-Tarraga A.M."/>
            <person name="Thomson N.R."/>
            <person name="Bason N."/>
            <person name="Quail M.A."/>
            <person name="Sharp S."/>
            <person name="Cherevach I."/>
            <person name="Churcher C."/>
            <person name="Goodhead I."/>
            <person name="Hauser H."/>
            <person name="Holroyd N."/>
            <person name="Mungall K."/>
            <person name="Scott P."/>
            <person name="Walker D."/>
            <person name="White B."/>
            <person name="Rose H."/>
            <person name="Iversen P."/>
            <person name="Mil-Homens D."/>
            <person name="Rocha E.P."/>
            <person name="Fialho A.M."/>
            <person name="Baldwin A."/>
            <person name="Dowson C."/>
            <person name="Barrell B.G."/>
            <person name="Govan J.R."/>
            <person name="Vandamme P."/>
            <person name="Hart C.A."/>
            <person name="Mahenthiralingam E."/>
            <person name="Parkhill J."/>
        </authorList>
    </citation>
    <scope>NUCLEOTIDE SEQUENCE [LARGE SCALE GENOMIC DNA]</scope>
    <source>
        <strain>ATCC BAA-245 / DSM 16553 / LMG 16656 / NCTC 13227 / J2315 / CF5610</strain>
    </source>
</reference>
<feature type="chain" id="PRO_1000143481" description="ATP synthase subunit beta">
    <location>
        <begin position="1"/>
        <end position="464"/>
    </location>
</feature>
<feature type="binding site" evidence="1">
    <location>
        <begin position="153"/>
        <end position="160"/>
    </location>
    <ligand>
        <name>ATP</name>
        <dbReference type="ChEBI" id="CHEBI:30616"/>
    </ligand>
</feature>